<reference key="1">
    <citation type="journal article" date="2004" name="Nature">
        <title>Genome sequence of the Brown Norway rat yields insights into mammalian evolution.</title>
        <authorList>
            <person name="Gibbs R.A."/>
            <person name="Weinstock G.M."/>
            <person name="Metzker M.L."/>
            <person name="Muzny D.M."/>
            <person name="Sodergren E.J."/>
            <person name="Scherer S."/>
            <person name="Scott G."/>
            <person name="Steffen D."/>
            <person name="Worley K.C."/>
            <person name="Burch P.E."/>
            <person name="Okwuonu G."/>
            <person name="Hines S."/>
            <person name="Lewis L."/>
            <person name="Deramo C."/>
            <person name="Delgado O."/>
            <person name="Dugan-Rocha S."/>
            <person name="Miner G."/>
            <person name="Morgan M."/>
            <person name="Hawes A."/>
            <person name="Gill R."/>
            <person name="Holt R.A."/>
            <person name="Adams M.D."/>
            <person name="Amanatides P.G."/>
            <person name="Baden-Tillson H."/>
            <person name="Barnstead M."/>
            <person name="Chin S."/>
            <person name="Evans C.A."/>
            <person name="Ferriera S."/>
            <person name="Fosler C."/>
            <person name="Glodek A."/>
            <person name="Gu Z."/>
            <person name="Jennings D."/>
            <person name="Kraft C.L."/>
            <person name="Nguyen T."/>
            <person name="Pfannkoch C.M."/>
            <person name="Sitter C."/>
            <person name="Sutton G.G."/>
            <person name="Venter J.C."/>
            <person name="Woodage T."/>
            <person name="Smith D."/>
            <person name="Lee H.-M."/>
            <person name="Gustafson E."/>
            <person name="Cahill P."/>
            <person name="Kana A."/>
            <person name="Doucette-Stamm L."/>
            <person name="Weinstock K."/>
            <person name="Fechtel K."/>
            <person name="Weiss R.B."/>
            <person name="Dunn D.M."/>
            <person name="Green E.D."/>
            <person name="Blakesley R.W."/>
            <person name="Bouffard G.G."/>
            <person name="De Jong P.J."/>
            <person name="Osoegawa K."/>
            <person name="Zhu B."/>
            <person name="Marra M."/>
            <person name="Schein J."/>
            <person name="Bosdet I."/>
            <person name="Fjell C."/>
            <person name="Jones S."/>
            <person name="Krzywinski M."/>
            <person name="Mathewson C."/>
            <person name="Siddiqui A."/>
            <person name="Wye N."/>
            <person name="McPherson J."/>
            <person name="Zhao S."/>
            <person name="Fraser C.M."/>
            <person name="Shetty J."/>
            <person name="Shatsman S."/>
            <person name="Geer K."/>
            <person name="Chen Y."/>
            <person name="Abramzon S."/>
            <person name="Nierman W.C."/>
            <person name="Havlak P.H."/>
            <person name="Chen R."/>
            <person name="Durbin K.J."/>
            <person name="Egan A."/>
            <person name="Ren Y."/>
            <person name="Song X.-Z."/>
            <person name="Li B."/>
            <person name="Liu Y."/>
            <person name="Qin X."/>
            <person name="Cawley S."/>
            <person name="Cooney A.J."/>
            <person name="D'Souza L.M."/>
            <person name="Martin K."/>
            <person name="Wu J.Q."/>
            <person name="Gonzalez-Garay M.L."/>
            <person name="Jackson A.R."/>
            <person name="Kalafus K.J."/>
            <person name="McLeod M.P."/>
            <person name="Milosavljevic A."/>
            <person name="Virk D."/>
            <person name="Volkov A."/>
            <person name="Wheeler D.A."/>
            <person name="Zhang Z."/>
            <person name="Bailey J.A."/>
            <person name="Eichler E.E."/>
            <person name="Tuzun E."/>
            <person name="Birney E."/>
            <person name="Mongin E."/>
            <person name="Ureta-Vidal A."/>
            <person name="Woodwark C."/>
            <person name="Zdobnov E."/>
            <person name="Bork P."/>
            <person name="Suyama M."/>
            <person name="Torrents D."/>
            <person name="Alexandersson M."/>
            <person name="Trask B.J."/>
            <person name="Young J.M."/>
            <person name="Huang H."/>
            <person name="Wang H."/>
            <person name="Xing H."/>
            <person name="Daniels S."/>
            <person name="Gietzen D."/>
            <person name="Schmidt J."/>
            <person name="Stevens K."/>
            <person name="Vitt U."/>
            <person name="Wingrove J."/>
            <person name="Camara F."/>
            <person name="Mar Alba M."/>
            <person name="Abril J.F."/>
            <person name="Guigo R."/>
            <person name="Smit A."/>
            <person name="Dubchak I."/>
            <person name="Rubin E.M."/>
            <person name="Couronne O."/>
            <person name="Poliakov A."/>
            <person name="Huebner N."/>
            <person name="Ganten D."/>
            <person name="Goesele C."/>
            <person name="Hummel O."/>
            <person name="Kreitler T."/>
            <person name="Lee Y.-A."/>
            <person name="Monti J."/>
            <person name="Schulz H."/>
            <person name="Zimdahl H."/>
            <person name="Himmelbauer H."/>
            <person name="Lehrach H."/>
            <person name="Jacob H.J."/>
            <person name="Bromberg S."/>
            <person name="Gullings-Handley J."/>
            <person name="Jensen-Seaman M.I."/>
            <person name="Kwitek A.E."/>
            <person name="Lazar J."/>
            <person name="Pasko D."/>
            <person name="Tonellato P.J."/>
            <person name="Twigger S."/>
            <person name="Ponting C.P."/>
            <person name="Duarte J.M."/>
            <person name="Rice S."/>
            <person name="Goodstadt L."/>
            <person name="Beatson S.A."/>
            <person name="Emes R.D."/>
            <person name="Winter E.E."/>
            <person name="Webber C."/>
            <person name="Brandt P."/>
            <person name="Nyakatura G."/>
            <person name="Adetobi M."/>
            <person name="Chiaromonte F."/>
            <person name="Elnitski L."/>
            <person name="Eswara P."/>
            <person name="Hardison R.C."/>
            <person name="Hou M."/>
            <person name="Kolbe D."/>
            <person name="Makova K."/>
            <person name="Miller W."/>
            <person name="Nekrutenko A."/>
            <person name="Riemer C."/>
            <person name="Schwartz S."/>
            <person name="Taylor J."/>
            <person name="Yang S."/>
            <person name="Zhang Y."/>
            <person name="Lindpaintner K."/>
            <person name="Andrews T.D."/>
            <person name="Caccamo M."/>
            <person name="Clamp M."/>
            <person name="Clarke L."/>
            <person name="Curwen V."/>
            <person name="Durbin R.M."/>
            <person name="Eyras E."/>
            <person name="Searle S.M."/>
            <person name="Cooper G.M."/>
            <person name="Batzoglou S."/>
            <person name="Brudno M."/>
            <person name="Sidow A."/>
            <person name="Stone E.A."/>
            <person name="Payseur B.A."/>
            <person name="Bourque G."/>
            <person name="Lopez-Otin C."/>
            <person name="Puente X.S."/>
            <person name="Chakrabarti K."/>
            <person name="Chatterji S."/>
            <person name="Dewey C."/>
            <person name="Pachter L."/>
            <person name="Bray N."/>
            <person name="Yap V.B."/>
            <person name="Caspi A."/>
            <person name="Tesler G."/>
            <person name="Pevzner P.A."/>
            <person name="Haussler D."/>
            <person name="Roskin K.M."/>
            <person name="Baertsch R."/>
            <person name="Clawson H."/>
            <person name="Furey T.S."/>
            <person name="Hinrichs A.S."/>
            <person name="Karolchik D."/>
            <person name="Kent W.J."/>
            <person name="Rosenbloom K.R."/>
            <person name="Trumbower H."/>
            <person name="Weirauch M."/>
            <person name="Cooper D.N."/>
            <person name="Stenson P.D."/>
            <person name="Ma B."/>
            <person name="Brent M."/>
            <person name="Arumugam M."/>
            <person name="Shteynberg D."/>
            <person name="Copley R.R."/>
            <person name="Taylor M.S."/>
            <person name="Riethman H."/>
            <person name="Mudunuri U."/>
            <person name="Peterson J."/>
            <person name="Guyer M."/>
            <person name="Felsenfeld A."/>
            <person name="Old S."/>
            <person name="Mockrin S."/>
            <person name="Collins F.S."/>
        </authorList>
    </citation>
    <scope>NUCLEOTIDE SEQUENCE [LARGE SCALE GENOMIC DNA]</scope>
    <source>
        <strain>Brown Norway</strain>
    </source>
</reference>
<reference key="2">
    <citation type="journal article" date="1995" name="J. Cell Sci.">
        <title>Identification and molecular evolution of new dynein-like protein sequences in rat brain.</title>
        <authorList>
            <person name="Tanaka Y."/>
            <person name="Zhang Z."/>
            <person name="Hirokawa N."/>
        </authorList>
    </citation>
    <scope>NUCLEOTIDE SEQUENCE [MRNA] OF 1369-1529</scope>
    <scope>TISSUE SPECIFICITY</scope>
    <source>
        <strain>Wistar</strain>
        <tissue>Brain</tissue>
    </source>
</reference>
<reference key="3">
    <citation type="journal article" date="1996" name="Mol. Biol. Cell">
        <title>Identification of seven rat axonemal dynein heavy chain genes: expression during ciliated cell differentiation.</title>
        <authorList>
            <person name="Andrews K.L."/>
            <person name="Nettesheim P."/>
            <person name="Asai D.J."/>
            <person name="Ostrowski L.E."/>
        </authorList>
    </citation>
    <scope>NUCLEOTIDE SEQUENCE [MRNA] OF 1372-1459</scope>
    <scope>INDUCTION</scope>
    <source>
        <tissue>Trachea</tissue>
    </source>
</reference>
<protein>
    <recommendedName>
        <fullName>Dynein axonemal heavy chain 7</fullName>
    </recommendedName>
    <alternativeName>
        <fullName>Axonemal beta dynein heavy chain 7</fullName>
    </alternativeName>
    <alternativeName>
        <fullName>Axonemal dynein heavy chain b</fullName>
    </alternativeName>
    <alternativeName>
        <fullName>Ciliary dynein heavy chain 7</fullName>
    </alternativeName>
    <alternativeName>
        <fullName>Dynein-like protein 7</fullName>
    </alternativeName>
</protein>
<comment type="function">
    <text evidence="2">Force generating protein that probably plays an important role in respiratory cilia and sperm flagella beating (By similarity). Produces force towards the minus ends of microtubules. Dynein has ATPase activity; the force-producing power stroke is thought to occur on release of ADP (By similarity).</text>
</comment>
<comment type="subunit">
    <text evidence="1">The dynein complex consists of at least two heavy chains and a number of intermediate and light chains.</text>
</comment>
<comment type="subcellular location">
    <subcellularLocation>
        <location evidence="2">Cytoplasm</location>
        <location evidence="2">Cytoskeleton</location>
        <location evidence="2">Cilium axoneme</location>
    </subcellularLocation>
    <subcellularLocation>
        <location evidence="2">Cell projection</location>
        <location evidence="2">Cilium</location>
        <location evidence="2">Flagellum</location>
    </subcellularLocation>
</comment>
<comment type="tissue specificity">
    <text evidence="5">Detected in brain.</text>
</comment>
<comment type="induction">
    <text evidence="6">Up-regulated during ciliogenesis.</text>
</comment>
<comment type="domain">
    <text evidence="1">Dynein heavy chains probably consist of an N-terminal stem (which binds cargo and interacts with other dynein components), and the head or motor domain. The motor contains six tandemly-linked AAA domains in the head, which form a ring. A stalk-like structure (formed by two of the coiled coil domains) protrudes between AAA 4 and AAA 5 and terminates in a microtubule-binding site. A seventh domain may also contribute to this ring; it is not clear whether the N-terminus or the C-terminus forms this extra domain. There are four well-conserved and two non-conserved ATPase sites, one per AAA domain. Probably only one of these (within AAA 1) actually hydrolyzes ATP, the others may serve a regulatory function (By similarity).</text>
</comment>
<comment type="similarity">
    <text evidence="7">Belongs to the dynein heavy chain family.</text>
</comment>
<name>DYH7_RAT</name>
<gene>
    <name type="primary">Dnah7</name>
    <name type="synonym">Axob</name>
    <name type="synonym">Dlp7</name>
</gene>
<proteinExistence type="evidence at transcript level"/>
<accession>Q63170</accession>
<accession>Q62821</accession>
<sequence length="4057" mass="464557">MSSEQVRAGSPGSRVPGARRTGAVWTAPSENLDSSTIPALCVSLLFPSQPLDVVVTMGHNTLGMRQLWKLALQRPQLLSGSTGVKPQWQQTAPSFHLNVKQENPIEPYNVKNEQSYAEYMEHFGKKGKLLDQIDDTRSAPSTSRSKVKSPHKERENFRSTLVNVIMQQDSSLEPDVTDESGIPKATTSAIEKDILRYYYYIHHGIDTDNVAPMEDSWLEHVLQLVPQHLKVLTNSITVLSDEMREDYLLSVKKSIVDFVLKDPREKEDDTKITELPPHRAEMEVLPKPWRRSFLSACSYIRDHLNAMNPTMLAVLDLWHSTFKKLRLVDIEEFHNRQDALELSGFQNIVIKHMESAKETLLKTWFPEVQNIYYQGNKKKQLPTGDSSAKLESFFNCAATLMTLQLQDLILVSMQDFTDLIAQPPESIRAFEHPGFIMRLVLDKKAVKFEPEFTDYIDILVNVYEIMIKAVSFVPRVETKLYSKWESKSKPTTLKPIILDEIIDAHKEKIREVVLRESVAPTEHLKMYDKYQFLITRQAEQDIEEFLTQSQNYERLIEEIRKYQKLGEEIQYTSRKTVRLGMFEMHCEELIRSLVKRADIICGKLIAKMFRDHQEVNTMLCEEFEKIAEKALSTPPNTAELMEMKAHIQKVETTDMLDLGQRLVDSKNCLAFLIECVNFSPADIRLNNSVFQWYGRMGEIFDEHRKIIKDKTEQYQEGLKLRCERFVEELESYAKQAEEFYTFGDLQDVQRYLKKAQVLNSKLDAAADKIEQFNAEEEAFGWIPSVYPQRKKIQDGLNPYLRLYETAVEFSTKHRAWTEGPYHKVNPDQVEADVGNYWRGLYKLEKAFHDSPNALAMTKKVRARVEDFKQYIPLVQVICNPGLRPRHWEAMSAIVGYPLQPSDDSTVFSFIDMNLEPFLDRFEGISEAASKEYSLEKSMDKMMTEWEAMEFVIHPYRESGTFILSAVDDIQMLLDDHIIKTQTMRGSPFIKPYEKQMREWEGKLLLLQEILDEWLKVQATWLYLEPIFSSPDIMSQMPEEGRRFTAVDKTWRDVMKMVVQNKHVLAVVTIERMLERMKKSNELLELILKGLNEYLEKKRLFFPRFFFLSNDELLEILSETKDPTRVQPHLKKCFEGIARVEFTETLDITHMKSSEGEVVELVDTISTTKARGQVEKWLVELERIMIKSIHKVIGDAITAYTKNARINWVRDWPGQTVLCVSQTFWTVEVQVAIPMGHKALEDYLGKCNHQIDDIVTLVRGKLSKQNRVTLGALVVLDVHARDVLANLVKKRISDDTDFEWLSQLRYYWHENNLETKMINAGLRYGYEYLGNSPRMVLAPFCDYCFLTLFGALHLHLGGAPEGPAGTGKTETTKDLAKAVAKQCVVFNCSDGLDYLALGKFFKGLLSCGAWACFDEFNRIDLEVLSVVAQQILTIQIGINSGTELLVFEGTELKLDPTCAVFITMNPGYAGRSELPDNLKALFRTVAMMVPDYAMIAEIVLYSCGFVTARPLSIKIVATYRLCSEQLSSQHHYDYGMRAVKSVLTAAGNLKLKYPNENEEILLLRSIIDVNLPKFLSHDLPLFEGITSDLFPGVKLPKPDYNDLLAAIRENCHSMNLQMTNFFSEKILQIYEMMIVRHGFMIVGEPFGGKTSAYRVLAGALGDICEKGLMEENKVQITVLNPKSVTMGQLYGQFDLVSHEWSDGILAVSFRAFAASSTPDRKWLIFDGPVDAVWIENMNTVLDDNKKLCLMSGEIIQMSPQMNLIFEPMDLEVASPATVSRCGMIYMEPQMLGWRPLMVSWINTLPQSVSIIQKEFIEGLFDRMVPLSVEFIRRHTKELSPTSDTNLVRSLMNLIDCFMDDFADENKQKERNDRENFSLLEGIFLFSLIWSVGASCTADDRIKYNKILRELMEGPISDLTRNKFKLLSGTEQTSSKALTVPFPEKGTIYDYQFIPEGLGRWDQWIKKLADTPPIPKDVQFNEIIVPTLDTVRYSALMSLLTTHQKPSIFVGPTGTGKSVYIINFLLNQLNKDIYKPLIVNFSAQTTAAQTQNIIMSKLDKRRKGVFGPPLGKRMIVFVDDVNMPAREVYGAQPPIELLRQWLDHWNWYDLKDCSMIKLVDIQIMCAMGPPGGGRNPITPRYMRHFNIITINEFSDKSMFTIFSRILTWHLRTCYKFPDDFLDLTTQIVNGTMTLYKDAMKNLLPTPAKSHYLFNLRDFSRVIQGVCLSRPETAENKEAIKRLWVHEVLRVYYDRLLDNADRSWLVNYIQEILRNYMQEDFHDLFKNLDFDNDGIVEEDDLRSLMFCDFHDPKREDFGYREIPNVDALRVIVEGHLDEYNNMSKKPMNLVLFRFAIEHISRISRILKQPRSHALLVGVGGSGRQSVTRLAAHMADYSLFQVEISKGYGSHEWHEDLKVILRKCAEGDMQGVFLFTDTQIKRESFLEDVNNLLNAGEVPNLFALDEKQEICEKMRQLDRQRDKTKQTDGSPIALFNMFIDRCRNQLHVVLAMSPIGDAFRIRLRKFPALVNCCTIDWFQSWPEDALEAVASRFLEDIEMSEEIREGCIDMCKSFHTSTINLSTTFHNELQRYNYVTPTSYLELISTFKLLLEKKRNEVMKMKRRYEVGLDKLDSASSQVATMQGELEALHPQLKVASRQVDDMMIMIEKESIEVAKTEKIVKADETVANDQAMAAKAIKDECDADLAEALPILESALAALDTLTAQDITVVKSMKSPPAGVKLVMEAICILKGIKADKIPDPTGSGKKIEDFWGPAKRLLGDIRFLQSLHEYDKDNIPPAYMNIIRKSYIPNPDFVPEKIRNASTAAEGLCKWVIAMDSYDKVAKIVAPKKIKLAAAEGELRIAMEGLRKKQAALREVQDKLAKLQDTLELNKQKKADLENQVDLCSKKLERAEQLIGGLGGEKTRWSNSALELGHLYVNLTGDILISSGVVAYLGAFTSNYRQHQTKEWSHSCKERDIPCSDDYSLMGTLGEAVTIRAWNIAGLPSDLFSIDNGIIIMNARRWPLMIDPQGQANKWIKNMEKTNSLQLIKLSDPDYVRTLENCIQFGTPVLLENVGEELDPILEPLLLKQTFKQGGSTCIRLGDSTIEYAPDFRFYITTKLRNPHYLPETSVKVTLLNFMITPEGMQDQLLGIVVARERPDLEEEKQALILQGAENKRQLKEIEDKILEVLSSSEGNILEDETAIKILSSSKALANEISQKQEVAEETEKKIDNTRMGYRPIAVHSSILFFSIADLANIEPMYQYSLTWFINLFILSIENSEKSDILSQRLHILRDHFTYSLYVNICRSLFEKDKMLFSFCLTVNLLIHENAINKAEWRFLLTGGIGLDNPYTNPCTWLPQKSWDEICRLDELHAFKTIRREFMRLKEGWKKVYDSMEPHHEIFPEEWENKANDFQRMLIIRCLRPDKVIPMLQEFIIKKLGRSFIEPPPFDLAKAFGDSNCCAPLIFVLSPGADPMNALLKFADDQGYGGSKLSSLSLGQGQGPIAMKMLEKAVKDGTWVVLQNCHLATSWMPTLEKVCEELSPESTHPDFRIWLTSYPSPNFPVSVLQNGVKMTNEAPKGLRANIIRSYLMDPISDPEFFGSCRKPEEFKKLLYGLCFFHALVQERRKFGPLGWNIPYEFNETDLRISVQQLHMFLNQYEELPYDALRYMTGECNYGGRVTDDWDRRTLRSILNKFFCTELVENPQYKFDSSGIYFVPPSGDHKSYIEYTKTLPLIPDPEIFGMNANADITKDQSETQLLFDNILLTQSRSSGSGAKSSDEVVNEVAGDILGKLPNNFDIESAMRRYPTTYTQSMNTVLVQEMGRFNKLLITIRESCINIQKAIKGLVVMSTELEEVVSSILNVKIPGMWMGKSYPSLKPLGSYVNDFLARLKFLQQWYEVGPPPVFWLSGFFFTQAFLTGAQQNYARKFTIPIDLLGFDYEVMDDKEYKNAPEDGVYIHGLFLDGASWNRKTKKLAESHPKVLYDTVPVMWLKPCKKSDIPKRPSYVAPLYKTSERRGTLSTTGHSTNFVIAMILPSDQPKEHWIGRGVALLCQLNS</sequence>
<organism>
    <name type="scientific">Rattus norvegicus</name>
    <name type="common">Rat</name>
    <dbReference type="NCBI Taxonomy" id="10116"/>
    <lineage>
        <taxon>Eukaryota</taxon>
        <taxon>Metazoa</taxon>
        <taxon>Chordata</taxon>
        <taxon>Craniata</taxon>
        <taxon>Vertebrata</taxon>
        <taxon>Euteleostomi</taxon>
        <taxon>Mammalia</taxon>
        <taxon>Eutheria</taxon>
        <taxon>Euarchontoglires</taxon>
        <taxon>Glires</taxon>
        <taxon>Rodentia</taxon>
        <taxon>Myomorpha</taxon>
        <taxon>Muroidea</taxon>
        <taxon>Muridae</taxon>
        <taxon>Murinae</taxon>
        <taxon>Rattus</taxon>
    </lineage>
</organism>
<keyword id="KW-0067">ATP-binding</keyword>
<keyword id="KW-0966">Cell projection</keyword>
<keyword id="KW-0969">Cilium</keyword>
<keyword id="KW-0175">Coiled coil</keyword>
<keyword id="KW-0963">Cytoplasm</keyword>
<keyword id="KW-0206">Cytoskeleton</keyword>
<keyword id="KW-0243">Dynein</keyword>
<keyword id="KW-0282">Flagellum</keyword>
<keyword id="KW-0493">Microtubule</keyword>
<keyword id="KW-0505">Motor protein</keyword>
<keyword id="KW-0547">Nucleotide-binding</keyword>
<keyword id="KW-1185">Reference proteome</keyword>
<keyword id="KW-0677">Repeat</keyword>
<dbReference type="EMBL" id="AABR03068169">
    <property type="status" value="NOT_ANNOTATED_CDS"/>
    <property type="molecule type" value="Genomic_DNA"/>
</dbReference>
<dbReference type="EMBL" id="AABR03068266">
    <property type="status" value="NOT_ANNOTATED_CDS"/>
    <property type="molecule type" value="Genomic_DNA"/>
</dbReference>
<dbReference type="EMBL" id="AABR03068762">
    <property type="status" value="NOT_ANNOTATED_CDS"/>
    <property type="molecule type" value="Genomic_DNA"/>
</dbReference>
<dbReference type="EMBL" id="AABR03068958">
    <property type="status" value="NOT_ANNOTATED_CDS"/>
    <property type="molecule type" value="Genomic_DNA"/>
</dbReference>
<dbReference type="EMBL" id="AABR03068975">
    <property type="status" value="NOT_ANNOTATED_CDS"/>
    <property type="molecule type" value="Genomic_DNA"/>
</dbReference>
<dbReference type="EMBL" id="AABR03069173">
    <property type="status" value="NOT_ANNOTATED_CDS"/>
    <property type="molecule type" value="Genomic_DNA"/>
</dbReference>
<dbReference type="EMBL" id="AABR03069339">
    <property type="status" value="NOT_ANNOTATED_CDS"/>
    <property type="molecule type" value="Genomic_DNA"/>
</dbReference>
<dbReference type="EMBL" id="AABR03069471">
    <property type="status" value="NOT_ANNOTATED_CDS"/>
    <property type="molecule type" value="Genomic_DNA"/>
</dbReference>
<dbReference type="EMBL" id="AABR03070154">
    <property type="status" value="NOT_ANNOTATED_CDS"/>
    <property type="molecule type" value="Genomic_DNA"/>
</dbReference>
<dbReference type="EMBL" id="AABR03071231">
    <property type="status" value="NOT_ANNOTATED_CDS"/>
    <property type="molecule type" value="Genomic_DNA"/>
</dbReference>
<dbReference type="EMBL" id="AABR03071501">
    <property type="status" value="NOT_ANNOTATED_CDS"/>
    <property type="molecule type" value="Genomic_DNA"/>
</dbReference>
<dbReference type="EMBL" id="AABR03071646">
    <property type="status" value="NOT_ANNOTATED_CDS"/>
    <property type="molecule type" value="Genomic_DNA"/>
</dbReference>
<dbReference type="EMBL" id="AABR03071706">
    <property type="status" value="NOT_ANNOTATED_CDS"/>
    <property type="molecule type" value="Genomic_DNA"/>
</dbReference>
<dbReference type="EMBL" id="AABR03071857">
    <property type="status" value="NOT_ANNOTATED_CDS"/>
    <property type="molecule type" value="Genomic_DNA"/>
</dbReference>
<dbReference type="EMBL" id="AABR03072256">
    <property type="status" value="NOT_ANNOTATED_CDS"/>
    <property type="molecule type" value="Genomic_DNA"/>
</dbReference>
<dbReference type="EMBL" id="D26498">
    <property type="protein sequence ID" value="BAA05506.1"/>
    <property type="molecule type" value="mRNA"/>
</dbReference>
<dbReference type="EMBL" id="U32180">
    <property type="protein sequence ID" value="AAC52363.1"/>
    <property type="molecule type" value="mRNA"/>
</dbReference>
<dbReference type="PIR" id="I70177">
    <property type="entry name" value="I70177"/>
</dbReference>
<dbReference type="SMR" id="Q63170"/>
<dbReference type="FunCoup" id="Q63170">
    <property type="interactions" value="249"/>
</dbReference>
<dbReference type="STRING" id="10116.ENSRNOP00000070606"/>
<dbReference type="CarbonylDB" id="Q63170"/>
<dbReference type="GlyGen" id="Q63170">
    <property type="glycosylation" value="3 sites"/>
</dbReference>
<dbReference type="PhosphoSitePlus" id="Q63170"/>
<dbReference type="PaxDb" id="10116-ENSRNOP00000016465"/>
<dbReference type="UCSC" id="RGD:621798">
    <property type="organism name" value="rat"/>
</dbReference>
<dbReference type="AGR" id="RGD:621798"/>
<dbReference type="RGD" id="621798">
    <property type="gene designation" value="Dnah7"/>
</dbReference>
<dbReference type="eggNOG" id="KOG3595">
    <property type="taxonomic scope" value="Eukaryota"/>
</dbReference>
<dbReference type="InParanoid" id="Q63170"/>
<dbReference type="PhylomeDB" id="Q63170"/>
<dbReference type="PRO" id="PR:Q63170"/>
<dbReference type="Proteomes" id="UP000002494">
    <property type="component" value="Unplaced"/>
</dbReference>
<dbReference type="GO" id="GO:0097729">
    <property type="term" value="C:9+2 motile cilium"/>
    <property type="evidence" value="ECO:0000318"/>
    <property type="project" value="GO_Central"/>
</dbReference>
<dbReference type="GO" id="GO:0005929">
    <property type="term" value="C:cilium"/>
    <property type="evidence" value="ECO:0000266"/>
    <property type="project" value="RGD"/>
</dbReference>
<dbReference type="GO" id="GO:0036156">
    <property type="term" value="C:inner dynein arm"/>
    <property type="evidence" value="ECO:0000266"/>
    <property type="project" value="RGD"/>
</dbReference>
<dbReference type="GO" id="GO:0005874">
    <property type="term" value="C:microtubule"/>
    <property type="evidence" value="ECO:0007669"/>
    <property type="project" value="UniProtKB-KW"/>
</dbReference>
<dbReference type="GO" id="GO:0005524">
    <property type="term" value="F:ATP binding"/>
    <property type="evidence" value="ECO:0007669"/>
    <property type="project" value="UniProtKB-KW"/>
</dbReference>
<dbReference type="GO" id="GO:0016887">
    <property type="term" value="F:ATP hydrolysis activity"/>
    <property type="evidence" value="ECO:0007669"/>
    <property type="project" value="InterPro"/>
</dbReference>
<dbReference type="GO" id="GO:0005509">
    <property type="term" value="F:calcium ion binding"/>
    <property type="evidence" value="ECO:0007669"/>
    <property type="project" value="InterPro"/>
</dbReference>
<dbReference type="GO" id="GO:0045505">
    <property type="term" value="F:dynein intermediate chain binding"/>
    <property type="evidence" value="ECO:0000318"/>
    <property type="project" value="GO_Central"/>
</dbReference>
<dbReference type="GO" id="GO:0051959">
    <property type="term" value="F:dynein light intermediate chain binding"/>
    <property type="evidence" value="ECO:0000318"/>
    <property type="project" value="GO_Central"/>
</dbReference>
<dbReference type="GO" id="GO:0008569">
    <property type="term" value="F:minus-end-directed microtubule motor activity"/>
    <property type="evidence" value="ECO:0000318"/>
    <property type="project" value="GO_Central"/>
</dbReference>
<dbReference type="GO" id="GO:0003341">
    <property type="term" value="P:cilium movement"/>
    <property type="evidence" value="ECO:0000266"/>
    <property type="project" value="RGD"/>
</dbReference>
<dbReference type="GO" id="GO:0060294">
    <property type="term" value="P:cilium movement involved in cell motility"/>
    <property type="evidence" value="ECO:0000318"/>
    <property type="project" value="GO_Central"/>
</dbReference>
<dbReference type="GO" id="GO:0036159">
    <property type="term" value="P:inner dynein arm assembly"/>
    <property type="evidence" value="ECO:0000266"/>
    <property type="project" value="RGD"/>
</dbReference>
<dbReference type="FunFam" id="1.20.1270.280:FF:000038">
    <property type="entry name" value="AT13908p"/>
    <property type="match status" value="1"/>
</dbReference>
<dbReference type="FunFam" id="1.20.920.30:FF:000002">
    <property type="entry name" value="Dynein axonemal heavy chain 3"/>
    <property type="match status" value="1"/>
</dbReference>
<dbReference type="FunFam" id="1.10.8.1220:FF:000001">
    <property type="entry name" value="Dynein axonemal heavy chain 5"/>
    <property type="match status" value="1"/>
</dbReference>
<dbReference type="FunFam" id="1.10.8.710:FF:000004">
    <property type="entry name" value="Dynein axonemal heavy chain 6"/>
    <property type="match status" value="1"/>
</dbReference>
<dbReference type="FunFam" id="1.20.140.100:FF:000004">
    <property type="entry name" value="Dynein axonemal heavy chain 6"/>
    <property type="match status" value="1"/>
</dbReference>
<dbReference type="FunFam" id="1.10.472.130:FF:000005">
    <property type="entry name" value="Dynein axonemal heavy chain 7"/>
    <property type="match status" value="1"/>
</dbReference>
<dbReference type="FunFam" id="3.40.50.300:FF:002141">
    <property type="entry name" value="Dynein heavy chain"/>
    <property type="match status" value="1"/>
</dbReference>
<dbReference type="FunFam" id="3.20.180.20:FF:000003">
    <property type="entry name" value="Dynein heavy chain 12, axonemal"/>
    <property type="match status" value="1"/>
</dbReference>
<dbReference type="FunFam" id="1.10.287.2620:FF:000002">
    <property type="entry name" value="Dynein heavy chain 2, axonemal"/>
    <property type="match status" value="1"/>
</dbReference>
<dbReference type="FunFam" id="3.40.50.300:FF:000223">
    <property type="entry name" value="Dynein heavy chain 3, axonemal"/>
    <property type="match status" value="1"/>
</dbReference>
<dbReference type="FunFam" id="3.40.50.300:FF:001328">
    <property type="entry name" value="Dynein heavy chain 6, axonemal"/>
    <property type="match status" value="1"/>
</dbReference>
<dbReference type="FunFam" id="3.40.50.300:FF:000063">
    <property type="entry name" value="dynein heavy chain 6, axonemal"/>
    <property type="match status" value="1"/>
</dbReference>
<dbReference type="FunFam" id="1.10.8.720:FF:000001">
    <property type="entry name" value="dynein heavy chain 7, axonemal"/>
    <property type="match status" value="1"/>
</dbReference>
<dbReference type="FunFam" id="3.10.490.20:FF:000001">
    <property type="entry name" value="dynein heavy chain 7, axonemal"/>
    <property type="match status" value="1"/>
</dbReference>
<dbReference type="FunFam" id="1.20.58.1120:FF:000005">
    <property type="entry name" value="Dynein, axonemal, heavy chain 12"/>
    <property type="match status" value="1"/>
</dbReference>
<dbReference type="FunFam" id="1.20.920.20:FF:000006">
    <property type="entry name" value="Dynein, axonemal, heavy chain 6"/>
    <property type="match status" value="1"/>
</dbReference>
<dbReference type="FunFam" id="3.40.50.300:FF:000362">
    <property type="entry name" value="Dynein, axonemal, heavy chain 6"/>
    <property type="match status" value="1"/>
</dbReference>
<dbReference type="FunFam" id="1.20.1270.280:FF:000037">
    <property type="entry name" value="Dynein, axonemal, heavy chain 7"/>
    <property type="match status" value="1"/>
</dbReference>
<dbReference type="Gene3D" id="1.10.287.2620">
    <property type="match status" value="1"/>
</dbReference>
<dbReference type="Gene3D" id="1.10.472.130">
    <property type="match status" value="1"/>
</dbReference>
<dbReference type="Gene3D" id="1.10.8.1220">
    <property type="match status" value="1"/>
</dbReference>
<dbReference type="Gene3D" id="1.10.8.710">
    <property type="match status" value="1"/>
</dbReference>
<dbReference type="Gene3D" id="1.20.1270.280">
    <property type="match status" value="1"/>
</dbReference>
<dbReference type="Gene3D" id="1.20.58.1120">
    <property type="match status" value="1"/>
</dbReference>
<dbReference type="Gene3D" id="1.20.920.20">
    <property type="match status" value="1"/>
</dbReference>
<dbReference type="Gene3D" id="1.20.920.30">
    <property type="match status" value="1"/>
</dbReference>
<dbReference type="Gene3D" id="3.10.490.20">
    <property type="match status" value="1"/>
</dbReference>
<dbReference type="Gene3D" id="6.10.140.1060">
    <property type="match status" value="1"/>
</dbReference>
<dbReference type="Gene3D" id="1.20.140.100">
    <property type="entry name" value="Dynein heavy chain, N-terminal domain 2"/>
    <property type="match status" value="1"/>
</dbReference>
<dbReference type="Gene3D" id="3.20.180.20">
    <property type="entry name" value="Dynein heavy chain, N-terminal domain 2"/>
    <property type="match status" value="1"/>
</dbReference>
<dbReference type="Gene3D" id="3.40.50.300">
    <property type="entry name" value="P-loop containing nucleotide triphosphate hydrolases"/>
    <property type="match status" value="5"/>
</dbReference>
<dbReference type="Gene3D" id="1.10.8.720">
    <property type="entry name" value="Region D6 of dynein motor"/>
    <property type="match status" value="1"/>
</dbReference>
<dbReference type="InterPro" id="IPR003593">
    <property type="entry name" value="AAA+_ATPase"/>
</dbReference>
<dbReference type="InterPro" id="IPR035699">
    <property type="entry name" value="AAA_6"/>
</dbReference>
<dbReference type="InterPro" id="IPR035706">
    <property type="entry name" value="AAA_9"/>
</dbReference>
<dbReference type="InterPro" id="IPR041658">
    <property type="entry name" value="AAA_lid_11"/>
</dbReference>
<dbReference type="InterPro" id="IPR042219">
    <property type="entry name" value="AAA_lid_11_sf"/>
</dbReference>
<dbReference type="InterPro" id="IPR026983">
    <property type="entry name" value="DHC"/>
</dbReference>
<dbReference type="InterPro" id="IPR041589">
    <property type="entry name" value="DNAH3_AAA_lid_1"/>
</dbReference>
<dbReference type="InterPro" id="IPR042222">
    <property type="entry name" value="Dynein_2_N"/>
</dbReference>
<dbReference type="InterPro" id="IPR043157">
    <property type="entry name" value="Dynein_AAA1S"/>
</dbReference>
<dbReference type="InterPro" id="IPR041466">
    <property type="entry name" value="Dynein_AAA5_ext"/>
</dbReference>
<dbReference type="InterPro" id="IPR041228">
    <property type="entry name" value="Dynein_C"/>
</dbReference>
<dbReference type="InterPro" id="IPR043160">
    <property type="entry name" value="Dynein_C_barrel"/>
</dbReference>
<dbReference type="InterPro" id="IPR024743">
    <property type="entry name" value="Dynein_HC_stalk"/>
</dbReference>
<dbReference type="InterPro" id="IPR024317">
    <property type="entry name" value="Dynein_heavy_chain_D4_dom"/>
</dbReference>
<dbReference type="InterPro" id="IPR004273">
    <property type="entry name" value="Dynein_heavy_D6_P-loop"/>
</dbReference>
<dbReference type="InterPro" id="IPR013602">
    <property type="entry name" value="Dynein_heavy_linker"/>
</dbReference>
<dbReference type="InterPro" id="IPR042228">
    <property type="entry name" value="Dynein_linker_3"/>
</dbReference>
<dbReference type="InterPro" id="IPR018247">
    <property type="entry name" value="EF_Hand_1_Ca_BS"/>
</dbReference>
<dbReference type="InterPro" id="IPR002048">
    <property type="entry name" value="EF_hand_dom"/>
</dbReference>
<dbReference type="InterPro" id="IPR027417">
    <property type="entry name" value="P-loop_NTPase"/>
</dbReference>
<dbReference type="PANTHER" id="PTHR22878:SF66">
    <property type="entry name" value="DYNEIN AXONEMAL HEAVY CHAIN 7"/>
    <property type="match status" value="1"/>
</dbReference>
<dbReference type="PANTHER" id="PTHR22878">
    <property type="entry name" value="DYNEIN HEAVY CHAIN 6, AXONEMAL-LIKE-RELATED"/>
    <property type="match status" value="1"/>
</dbReference>
<dbReference type="Pfam" id="PF12774">
    <property type="entry name" value="AAA_6"/>
    <property type="match status" value="1"/>
</dbReference>
<dbReference type="Pfam" id="PF12775">
    <property type="entry name" value="AAA_7"/>
    <property type="match status" value="1"/>
</dbReference>
<dbReference type="Pfam" id="PF12780">
    <property type="entry name" value="AAA_8"/>
    <property type="match status" value="1"/>
</dbReference>
<dbReference type="Pfam" id="PF12781">
    <property type="entry name" value="AAA_9"/>
    <property type="match status" value="1"/>
</dbReference>
<dbReference type="Pfam" id="PF17857">
    <property type="entry name" value="AAA_lid_1"/>
    <property type="match status" value="1"/>
</dbReference>
<dbReference type="Pfam" id="PF18198">
    <property type="entry name" value="AAA_lid_11"/>
    <property type="match status" value="1"/>
</dbReference>
<dbReference type="Pfam" id="PF08393">
    <property type="entry name" value="DHC_N2"/>
    <property type="match status" value="1"/>
</dbReference>
<dbReference type="Pfam" id="PF17852">
    <property type="entry name" value="Dynein_AAA_lid"/>
    <property type="match status" value="1"/>
</dbReference>
<dbReference type="Pfam" id="PF18199">
    <property type="entry name" value="Dynein_C"/>
    <property type="match status" value="1"/>
</dbReference>
<dbReference type="Pfam" id="PF03028">
    <property type="entry name" value="Dynein_heavy"/>
    <property type="match status" value="1"/>
</dbReference>
<dbReference type="Pfam" id="PF12777">
    <property type="entry name" value="MT"/>
    <property type="match status" value="1"/>
</dbReference>
<dbReference type="SMART" id="SM00382">
    <property type="entry name" value="AAA"/>
    <property type="match status" value="2"/>
</dbReference>
<dbReference type="SUPFAM" id="SSF52540">
    <property type="entry name" value="P-loop containing nucleoside triphosphate hydrolases"/>
    <property type="match status" value="4"/>
</dbReference>
<evidence type="ECO:0000250" key="1"/>
<evidence type="ECO:0000250" key="2">
    <source>
        <dbReference type="UniProtKB" id="Q8WXX0"/>
    </source>
</evidence>
<evidence type="ECO:0000255" key="3"/>
<evidence type="ECO:0000256" key="4">
    <source>
        <dbReference type="SAM" id="MobiDB-lite"/>
    </source>
</evidence>
<evidence type="ECO:0000269" key="5">
    <source>
    </source>
</evidence>
<evidence type="ECO:0000269" key="6">
    <source>
    </source>
</evidence>
<evidence type="ECO:0000305" key="7"/>
<feature type="chain" id="PRO_0000317667" description="Dynein axonemal heavy chain 7">
    <location>
        <begin position="1"/>
        <end position="4057"/>
    </location>
</feature>
<feature type="region of interest" description="Disordered" evidence="4">
    <location>
        <begin position="1"/>
        <end position="21"/>
    </location>
</feature>
<feature type="region of interest" description="Disordered" evidence="4">
    <location>
        <begin position="130"/>
        <end position="154"/>
    </location>
</feature>
<feature type="region of interest" description="AAA 1" evidence="1">
    <location>
        <begin position="1323"/>
        <end position="1544"/>
    </location>
</feature>
<feature type="region of interest" description="AAA 2" evidence="1">
    <location>
        <begin position="1604"/>
        <end position="1835"/>
    </location>
</feature>
<feature type="region of interest" description="AAA 3" evidence="1">
    <location>
        <begin position="1971"/>
        <end position="2222"/>
    </location>
</feature>
<feature type="region of interest" description="AAA 4" evidence="1">
    <location>
        <begin position="2335"/>
        <end position="2588"/>
    </location>
</feature>
<feature type="region of interest" description="Stalk" evidence="1">
    <location>
        <begin position="2605"/>
        <end position="2906"/>
    </location>
</feature>
<feature type="region of interest" description="AAA 5" evidence="1">
    <location>
        <begin position="2987"/>
        <end position="3217"/>
    </location>
</feature>
<feature type="region of interest" description="AAA 6" evidence="1">
    <location>
        <begin position="3430"/>
        <end position="3653"/>
    </location>
</feature>
<feature type="coiled-coil region" evidence="3">
    <location>
        <begin position="716"/>
        <end position="779"/>
    </location>
</feature>
<feature type="coiled-coil region" evidence="3">
    <location>
        <begin position="2602"/>
        <end position="2646"/>
    </location>
</feature>
<feature type="coiled-coil region" evidence="3">
    <location>
        <begin position="2860"/>
        <end position="2916"/>
    </location>
</feature>
<feature type="binding site" evidence="3">
    <location>
        <begin position="165"/>
        <end position="172"/>
    </location>
    <ligand>
        <name>ATP</name>
        <dbReference type="ChEBI" id="CHEBI:30616"/>
    </ligand>
</feature>
<feature type="binding site" evidence="3">
    <location>
        <begin position="1361"/>
        <end position="1368"/>
    </location>
    <ligand>
        <name>ATP</name>
        <dbReference type="ChEBI" id="CHEBI:30616"/>
    </ligand>
</feature>
<feature type="binding site" evidence="3">
    <location>
        <begin position="1642"/>
        <end position="1649"/>
    </location>
    <ligand>
        <name>ATP</name>
        <dbReference type="ChEBI" id="CHEBI:30616"/>
    </ligand>
</feature>
<feature type="binding site" evidence="3">
    <location>
        <begin position="2009"/>
        <end position="2016"/>
    </location>
    <ligand>
        <name>ATP</name>
        <dbReference type="ChEBI" id="CHEBI:30616"/>
    </ligand>
</feature>
<feature type="binding site" evidence="3">
    <location>
        <begin position="2374"/>
        <end position="2381"/>
    </location>
    <ligand>
        <name>ATP</name>
        <dbReference type="ChEBI" id="CHEBI:30616"/>
    </ligand>
</feature>
<feature type="sequence conflict" description="In Ref. 2; BAA05506." evidence="7" ref="2">
    <original>TEL</original>
    <variation>NRT</variation>
    <location>
        <begin position="1449"/>
        <end position="1451"/>
    </location>
</feature>